<organism>
    <name type="scientific">Nitrosospira multiformis (strain ATCC 25196 / NCIMB 11849 / C 71)</name>
    <dbReference type="NCBI Taxonomy" id="323848"/>
    <lineage>
        <taxon>Bacteria</taxon>
        <taxon>Pseudomonadati</taxon>
        <taxon>Pseudomonadota</taxon>
        <taxon>Betaproteobacteria</taxon>
        <taxon>Nitrosomonadales</taxon>
        <taxon>Nitrosomonadaceae</taxon>
        <taxon>Nitrosospira</taxon>
    </lineage>
</organism>
<accession>Q2YBW1</accession>
<keyword id="KW-0997">Cell inner membrane</keyword>
<keyword id="KW-1003">Cell membrane</keyword>
<keyword id="KW-0472">Membrane</keyword>
<keyword id="KW-1185">Reference proteome</keyword>
<keyword id="KW-0812">Transmembrane</keyword>
<keyword id="KW-1133">Transmembrane helix</keyword>
<proteinExistence type="inferred from homology"/>
<evidence type="ECO:0000255" key="1">
    <source>
        <dbReference type="HAMAP-Rule" id="MF_00672"/>
    </source>
</evidence>
<gene>
    <name type="ordered locus">Nmul_A0452</name>
</gene>
<dbReference type="EMBL" id="CP000103">
    <property type="protein sequence ID" value="ABB73760.1"/>
    <property type="molecule type" value="Genomic_DNA"/>
</dbReference>
<dbReference type="SMR" id="Q2YBW1"/>
<dbReference type="STRING" id="323848.Nmul_A0452"/>
<dbReference type="KEGG" id="nmu:Nmul_A0452"/>
<dbReference type="eggNOG" id="COG1295">
    <property type="taxonomic scope" value="Bacteria"/>
</dbReference>
<dbReference type="eggNOG" id="COG1959">
    <property type="taxonomic scope" value="Bacteria"/>
</dbReference>
<dbReference type="HOGENOM" id="CLU_032288_1_0_4"/>
<dbReference type="OrthoDB" id="9808671at2"/>
<dbReference type="Proteomes" id="UP000002718">
    <property type="component" value="Chromosome"/>
</dbReference>
<dbReference type="GO" id="GO:0005886">
    <property type="term" value="C:plasma membrane"/>
    <property type="evidence" value="ECO:0007669"/>
    <property type="project" value="UniProtKB-SubCell"/>
</dbReference>
<dbReference type="HAMAP" id="MF_00672">
    <property type="entry name" value="UPF0761"/>
    <property type="match status" value="1"/>
</dbReference>
<dbReference type="InterPro" id="IPR023679">
    <property type="entry name" value="UPF0761_bac"/>
</dbReference>
<dbReference type="InterPro" id="IPR017039">
    <property type="entry name" value="Virul_fac_BrkB"/>
</dbReference>
<dbReference type="NCBIfam" id="TIGR00765">
    <property type="entry name" value="yihY_not_rbn"/>
    <property type="match status" value="1"/>
</dbReference>
<dbReference type="PANTHER" id="PTHR30213">
    <property type="entry name" value="INNER MEMBRANE PROTEIN YHJD"/>
    <property type="match status" value="1"/>
</dbReference>
<dbReference type="PANTHER" id="PTHR30213:SF0">
    <property type="entry name" value="UPF0761 MEMBRANE PROTEIN YIHY"/>
    <property type="match status" value="1"/>
</dbReference>
<dbReference type="Pfam" id="PF03631">
    <property type="entry name" value="Virul_fac_BrkB"/>
    <property type="match status" value="1"/>
</dbReference>
<comment type="subcellular location">
    <subcellularLocation>
        <location evidence="1">Cell inner membrane</location>
        <topology evidence="1">Multi-pass membrane protein</topology>
    </subcellularLocation>
</comment>
<comment type="similarity">
    <text evidence="1">Belongs to the UPF0761 family.</text>
</comment>
<name>Y452_NITMU</name>
<protein>
    <recommendedName>
        <fullName evidence="1">UPF0761 membrane protein Nmul_A0452</fullName>
    </recommendedName>
</protein>
<feature type="chain" id="PRO_0000391042" description="UPF0761 membrane protein Nmul_A0452">
    <location>
        <begin position="1"/>
        <end position="426"/>
    </location>
</feature>
<feature type="transmembrane region" description="Helical" evidence="1">
    <location>
        <begin position="48"/>
        <end position="68"/>
    </location>
</feature>
<feature type="transmembrane region" description="Helical" evidence="1">
    <location>
        <begin position="106"/>
        <end position="126"/>
    </location>
</feature>
<feature type="transmembrane region" description="Helical" evidence="1">
    <location>
        <begin position="145"/>
        <end position="165"/>
    </location>
</feature>
<feature type="transmembrane region" description="Helical" evidence="1">
    <location>
        <begin position="187"/>
        <end position="207"/>
    </location>
</feature>
<feature type="transmembrane region" description="Helical" evidence="1">
    <location>
        <begin position="217"/>
        <end position="237"/>
    </location>
</feature>
<feature type="transmembrane region" description="Helical" evidence="1">
    <location>
        <begin position="255"/>
        <end position="275"/>
    </location>
</feature>
<sequence>MELFSQSSRPVAKVMKSIRPVDFMHYVLVRFFQHNCTQIAGSLTFTTLLSLVPMLAIGLSVIAAFPAFAEFSDRIKEFILTTMVPEAANKVISVYMQQFADNAAKLTAIGIAFLGVTALALMLTIDEALNSIWRVSRLRPLLHRLLIYWSVLTIGPLLIGASLSLTSWLMTASRGFTRDIPGGDIMLLRLSPLVLTSIAFSASYLIVPNRQVAWRHAIAGGVAAAIGFEIMKEGFAFYITRFPTYQAVYGTFATIPIFLLWLYLSWLMVLLGAVIAASLSSWRFREWRDDPNARGKQFFDALRLLGILGEALKAGKVETALSLQQQLMLSPEEVERILELMVKANFVRQVQEGGWVQILDPAEIRIADVYRLFAFRPEALRGTAGGDTRLEQLLDDIAVGIDEKMSLPLSQLFTSAEPEPPAEMSA</sequence>
<reference key="1">
    <citation type="submission" date="2005-08" db="EMBL/GenBank/DDBJ databases">
        <title>Complete sequence of chromosome 1 of Nitrosospira multiformis ATCC 25196.</title>
        <authorList>
            <person name="Copeland A."/>
            <person name="Lucas S."/>
            <person name="Lapidus A."/>
            <person name="Barry K."/>
            <person name="Detter J.C."/>
            <person name="Glavina T."/>
            <person name="Hammon N."/>
            <person name="Israni S."/>
            <person name="Pitluck S."/>
            <person name="Chain P."/>
            <person name="Malfatti S."/>
            <person name="Shin M."/>
            <person name="Vergez L."/>
            <person name="Schmutz J."/>
            <person name="Larimer F."/>
            <person name="Land M."/>
            <person name="Hauser L."/>
            <person name="Kyrpides N."/>
            <person name="Lykidis A."/>
            <person name="Richardson P."/>
        </authorList>
    </citation>
    <scope>NUCLEOTIDE SEQUENCE [LARGE SCALE GENOMIC DNA]</scope>
    <source>
        <strain>ATCC 25196 / NCIMB 11849 / C 71</strain>
    </source>
</reference>